<comment type="function">
    <text evidence="3">Alpha toxins bind voltage-independently at site-3 of sodium channels (Nav) and inhibit the inactivation of the activated channels, thereby blocking neuronal transmission. This toxin is active against insects (para/tipE).</text>
</comment>
<comment type="subcellular location">
    <subcellularLocation>
        <location>Secreted</location>
    </subcellularLocation>
</comment>
<comment type="tissue specificity">
    <text>Expressed by the venom gland.</text>
</comment>
<comment type="domain">
    <text evidence="4">Has the structural arrangement of an alpha-helix connected to antiparallel beta-sheets by disulfide bonds (CS-alpha/beta).</text>
</comment>
<comment type="mass spectrometry"/>
<comment type="toxic dose">
    <text evidence="3">PD(50) is 130 ng/g body weight to blowfly larvae, PD(50) is 50 ng/g body weight to locusts (Locusta migratoria). Not toxic by subcutaneous injection into mice.</text>
</comment>
<comment type="miscellaneous">
    <text evidence="5">Negative results: does not affect the mammalian Nav1.2/SCN2A sodium channel.</text>
</comment>
<comment type="similarity">
    <text evidence="4">Belongs to the long (4 C-C) scorpion toxin superfamily. Sodium channel inhibitor family. Alpha subfamily.</text>
</comment>
<proteinExistence type="evidence at protein level"/>
<feature type="signal peptide" evidence="3">
    <location>
        <begin position="1"/>
        <end position="19"/>
    </location>
</feature>
<feature type="chain" id="PRO_0000260005" description="Alpha-insect toxin BjaIT">
    <location>
        <begin position="20"/>
        <end position="83"/>
    </location>
</feature>
<feature type="domain" description="LCN-type CS-alpha/beta" evidence="2">
    <location>
        <begin position="21"/>
        <end position="83"/>
    </location>
</feature>
<feature type="modified residue" description="Arginine amide" evidence="1">
    <location>
        <position position="83"/>
    </location>
</feature>
<feature type="disulfide bond" evidence="2">
    <location>
        <begin position="31"/>
        <end position="82"/>
    </location>
</feature>
<feature type="disulfide bond" evidence="2">
    <location>
        <begin position="35"/>
        <end position="55"/>
    </location>
</feature>
<feature type="disulfide bond" evidence="2">
    <location>
        <begin position="41"/>
        <end position="65"/>
    </location>
</feature>
<feature type="disulfide bond" evidence="2">
    <location>
        <begin position="45"/>
        <end position="67"/>
    </location>
</feature>
<feature type="sequence conflict" description="In Ref. 1; AA sequence." evidence="4" ref="1">
    <original>G</original>
    <variation>V</variation>
    <location>
        <position position="16"/>
    </location>
</feature>
<sequence>MNYLVVICFALLLMTGVESGRDAYIADNLNCAYTCGSNSYCNTECTKNGAVSGYCQWLGKYGNACWCINLPDKVPIRIPGACRGR</sequence>
<name>SCIT_HOTJU</name>
<reference key="1">
    <citation type="journal article" date="2005" name="Insect Biochem. Mol. Biol.">
        <title>BjalphaIT: a novel scorpion alpha-toxin selective for insects -- unique pharmacological tool.</title>
        <authorList>
            <person name="Arnon T."/>
            <person name="Potikha T."/>
            <person name="Sher D."/>
            <person name="Elazar M."/>
            <person name="Mao W."/>
            <person name="Tal T."/>
            <person name="Bosmans F."/>
            <person name="Tytgat J."/>
            <person name="Ben-Arie N."/>
            <person name="Zlotkin E."/>
        </authorList>
    </citation>
    <scope>NUCLEOTIDE SEQUENCE [MRNA]</scope>
    <scope>PROTEIN SEQUENCE OF 20-46</scope>
    <scope>FUNCTION</scope>
    <scope>MASS SPECTROMETRY</scope>
    <scope>TOXIC DOSE</scope>
    <source>
        <tissue>Venom</tissue>
        <tissue>Venom gland</tissue>
    </source>
</reference>
<protein>
    <recommendedName>
        <fullName>Alpha-insect toxin BjaIT</fullName>
    </recommendedName>
    <alternativeName>
        <fullName>Bj-alpha-IT</fullName>
    </alternativeName>
</protein>
<keyword id="KW-0027">Amidation</keyword>
<keyword id="KW-0903">Direct protein sequencing</keyword>
<keyword id="KW-1015">Disulfide bond</keyword>
<keyword id="KW-0872">Ion channel impairing toxin</keyword>
<keyword id="KW-0528">Neurotoxin</keyword>
<keyword id="KW-0964">Secreted</keyword>
<keyword id="KW-0732">Signal</keyword>
<keyword id="KW-0800">Toxin</keyword>
<keyword id="KW-0738">Voltage-gated sodium channel impairing toxin</keyword>
<accession>Q56TT9</accession>
<dbReference type="EMBL" id="AY585097">
    <property type="protein sequence ID" value="AAT52203.1"/>
    <property type="molecule type" value="mRNA"/>
</dbReference>
<dbReference type="SMR" id="Q56TT9"/>
<dbReference type="GO" id="GO:0005576">
    <property type="term" value="C:extracellular region"/>
    <property type="evidence" value="ECO:0007669"/>
    <property type="project" value="UniProtKB-SubCell"/>
</dbReference>
<dbReference type="GO" id="GO:0019871">
    <property type="term" value="F:sodium channel inhibitor activity"/>
    <property type="evidence" value="ECO:0007669"/>
    <property type="project" value="InterPro"/>
</dbReference>
<dbReference type="GO" id="GO:0090729">
    <property type="term" value="F:toxin activity"/>
    <property type="evidence" value="ECO:0007669"/>
    <property type="project" value="UniProtKB-KW"/>
</dbReference>
<dbReference type="GO" id="GO:0006952">
    <property type="term" value="P:defense response"/>
    <property type="evidence" value="ECO:0007669"/>
    <property type="project" value="InterPro"/>
</dbReference>
<dbReference type="CDD" id="cd23106">
    <property type="entry name" value="neurotoxins_LC_scorpion"/>
    <property type="match status" value="1"/>
</dbReference>
<dbReference type="FunFam" id="3.30.30.10:FF:000002">
    <property type="entry name" value="Alpha-like toxin BmK-M1"/>
    <property type="match status" value="1"/>
</dbReference>
<dbReference type="Gene3D" id="3.30.30.10">
    <property type="entry name" value="Knottin, scorpion toxin-like"/>
    <property type="match status" value="1"/>
</dbReference>
<dbReference type="InterPro" id="IPR044062">
    <property type="entry name" value="LCN-type_CS_alpha_beta_dom"/>
</dbReference>
<dbReference type="InterPro" id="IPR003614">
    <property type="entry name" value="Scorpion_toxin-like"/>
</dbReference>
<dbReference type="InterPro" id="IPR036574">
    <property type="entry name" value="Scorpion_toxin-like_sf"/>
</dbReference>
<dbReference type="InterPro" id="IPR018218">
    <property type="entry name" value="Scorpion_toxinL"/>
</dbReference>
<dbReference type="InterPro" id="IPR002061">
    <property type="entry name" value="Scorpion_toxinL/defensin"/>
</dbReference>
<dbReference type="Pfam" id="PF00537">
    <property type="entry name" value="Toxin_3"/>
    <property type="match status" value="1"/>
</dbReference>
<dbReference type="PRINTS" id="PR00285">
    <property type="entry name" value="SCORPNTOXIN"/>
</dbReference>
<dbReference type="PRINTS" id="PR00284">
    <property type="entry name" value="TOXIN"/>
</dbReference>
<dbReference type="SMART" id="SM00505">
    <property type="entry name" value="Knot1"/>
    <property type="match status" value="1"/>
</dbReference>
<dbReference type="SUPFAM" id="SSF57095">
    <property type="entry name" value="Scorpion toxin-like"/>
    <property type="match status" value="1"/>
</dbReference>
<dbReference type="PROSITE" id="PS51863">
    <property type="entry name" value="LCN_CSAB"/>
    <property type="match status" value="1"/>
</dbReference>
<organism>
    <name type="scientific">Hottentotta judaicus</name>
    <name type="common">Black scorpion</name>
    <name type="synonym">Buthotus judaicus</name>
    <dbReference type="NCBI Taxonomy" id="6863"/>
    <lineage>
        <taxon>Eukaryota</taxon>
        <taxon>Metazoa</taxon>
        <taxon>Ecdysozoa</taxon>
        <taxon>Arthropoda</taxon>
        <taxon>Chelicerata</taxon>
        <taxon>Arachnida</taxon>
        <taxon>Scorpiones</taxon>
        <taxon>Buthida</taxon>
        <taxon>Buthoidea</taxon>
        <taxon>Buthidae</taxon>
        <taxon>Hottentotta</taxon>
    </lineage>
</organism>
<evidence type="ECO:0000250" key="1"/>
<evidence type="ECO:0000255" key="2">
    <source>
        <dbReference type="PROSITE-ProRule" id="PRU01210"/>
    </source>
</evidence>
<evidence type="ECO:0000269" key="3">
    <source>
    </source>
</evidence>
<evidence type="ECO:0000305" key="4"/>
<evidence type="ECO:0000305" key="5">
    <source>
    </source>
</evidence>